<feature type="chain" id="PRO_0000451789" description="Probable methyltransferase ICS2">
    <location>
        <begin position="1"/>
        <end position="364"/>
    </location>
</feature>
<feature type="binding site" evidence="1">
    <location>
        <position position="18"/>
    </location>
    <ligand>
        <name>S-adenosyl-L-homocysteine</name>
        <dbReference type="ChEBI" id="CHEBI:57856"/>
    </ligand>
</feature>
<feature type="binding site" evidence="1">
    <location>
        <position position="61"/>
    </location>
    <ligand>
        <name>S-adenosyl-L-homocysteine</name>
        <dbReference type="ChEBI" id="CHEBI:57856"/>
    </ligand>
</feature>
<feature type="binding site" evidence="1">
    <location>
        <position position="98"/>
    </location>
    <ligand>
        <name>S-adenosyl-L-homocysteine</name>
        <dbReference type="ChEBI" id="CHEBI:57856"/>
    </ligand>
</feature>
<feature type="binding site" evidence="1">
    <location>
        <position position="99"/>
    </location>
    <ligand>
        <name>S-adenosyl-L-homocysteine</name>
        <dbReference type="ChEBI" id="CHEBI:57856"/>
    </ligand>
</feature>
<feature type="binding site" evidence="1">
    <location>
        <position position="133"/>
    </location>
    <ligand>
        <name>S-adenosyl-L-homocysteine</name>
        <dbReference type="ChEBI" id="CHEBI:57856"/>
    </ligand>
</feature>
<feature type="binding site" evidence="1">
    <location>
        <position position="134"/>
    </location>
    <ligand>
        <name>S-adenosyl-L-homocysteine</name>
        <dbReference type="ChEBI" id="CHEBI:57856"/>
    </ligand>
</feature>
<feature type="binding site" evidence="4">
    <location>
        <position position="172"/>
    </location>
    <ligand>
        <name>Mg(2+)</name>
        <dbReference type="ChEBI" id="CHEBI:18420"/>
    </ligand>
</feature>
<feature type="binding site" evidence="4">
    <location>
        <position position="258"/>
    </location>
    <ligand>
        <name>Mg(2+)</name>
        <dbReference type="ChEBI" id="CHEBI:18420"/>
    </ligand>
</feature>
<feature type="binding site" evidence="4">
    <location>
        <position position="260"/>
    </location>
    <ligand>
        <name>Mg(2+)</name>
        <dbReference type="ChEBI" id="CHEBI:18420"/>
    </ligand>
</feature>
<feature type="binding site" evidence="4">
    <location>
        <position position="261"/>
    </location>
    <ligand>
        <name>Mg(2+)</name>
        <dbReference type="ChEBI" id="CHEBI:18420"/>
    </ligand>
</feature>
<feature type="site" description="Involved in substrate discrimination" evidence="5">
    <location>
        <position position="148"/>
    </location>
</feature>
<feature type="site" description="Involved in substrate discrimination" evidence="2">
    <location>
        <position position="220"/>
    </location>
</feature>
<feature type="site" description="Involved in substrate discrimination" evidence="5">
    <location>
        <position position="264"/>
    </location>
</feature>
<feature type="site" description="Involved in substrate discrimination" evidence="5">
    <location>
        <position position="312"/>
    </location>
</feature>
<feature type="site" description="Involved in substrate discrimination" evidence="5">
    <location>
        <position position="327"/>
    </location>
</feature>
<sequence>MEVKEALFMNKGEGESSYAQSSSFTETVTSMTMPVLENAVETLFSKDFHLLQALNAADLGCAAGPTTFTVISTIKRMMEKKCRELNCQTLELQVYLNDLPGNDFNTLFKGLSSKVVGNKCEEVPCYVVGVPGSFHGRLFPRNSLHLVHSCYSVHWLTQAPKGLTSKEGLALNKGKIYISKTSPPVVREAYLSQFHEDFTMFLNSRSQEVVPNGCMVLILRGRLSSDPSDMESCFTWELLAVAIAELVSQGLIDEDKLDTFNVPSYFPSLEEVKDIVERNGSFTIDHMEGFELDSPQMQENDKWVRGEKFATVARAFTEPIISNQFGHEIMDKLYEKFTHIVVSDLEAKIPKITSIILVLSKIVG</sequence>
<reference key="1">
    <citation type="journal article" date="2006" name="Mol. Genet. Genomics">
        <title>Substrate specificity of N-methyltransferase involved in purine alkaloids synthesis is dependent upon one amino acid residue of the enzyme.</title>
        <authorList>
            <person name="Yoneyama N."/>
            <person name="Morimoto H."/>
            <person name="Ye C.-X."/>
            <person name="Ashihara H."/>
            <person name="Mizuno K."/>
            <person name="Kato M."/>
        </authorList>
    </citation>
    <scope>NUCLEOTIDE SEQUENCE [MRNA]</scope>
    <scope>FUNCTION</scope>
</reference>
<keyword id="KW-0460">Magnesium</keyword>
<keyword id="KW-0479">Metal-binding</keyword>
<keyword id="KW-0489">Methyltransferase</keyword>
<keyword id="KW-0808">Transferase</keyword>
<gene>
    <name evidence="7" type="primary">ICS2</name>
</gene>
<protein>
    <recommendedName>
        <fullName evidence="7">Probable methyltransferase ICS2</fullName>
        <ecNumber evidence="3">2.1.1.-</ecNumber>
    </recommendedName>
</protein>
<name>ICS2_CAMIR</name>
<organism>
    <name type="scientific">Camellia irrawadiensis</name>
    <name type="common">Burmese tea</name>
    <dbReference type="NCBI Taxonomy" id="153142"/>
    <lineage>
        <taxon>Eukaryota</taxon>
        <taxon>Viridiplantae</taxon>
        <taxon>Streptophyta</taxon>
        <taxon>Embryophyta</taxon>
        <taxon>Tracheophyta</taxon>
        <taxon>Spermatophyta</taxon>
        <taxon>Magnoliopsida</taxon>
        <taxon>eudicotyledons</taxon>
        <taxon>Gunneridae</taxon>
        <taxon>Pentapetalae</taxon>
        <taxon>asterids</taxon>
        <taxon>Ericales</taxon>
        <taxon>Theaceae</taxon>
        <taxon>Camellia</taxon>
    </lineage>
</organism>
<evidence type="ECO:0000250" key="1">
    <source>
        <dbReference type="UniProtKB" id="A0A6C0WW36"/>
    </source>
</evidence>
<evidence type="ECO:0000250" key="2">
    <source>
        <dbReference type="UniProtKB" id="Q2HXI6"/>
    </source>
</evidence>
<evidence type="ECO:0000250" key="3">
    <source>
        <dbReference type="UniProtKB" id="Q2HXL9"/>
    </source>
</evidence>
<evidence type="ECO:0000250" key="4">
    <source>
        <dbReference type="UniProtKB" id="Q9FLN8"/>
    </source>
</evidence>
<evidence type="ECO:0000250" key="5">
    <source>
        <dbReference type="UniProtKB" id="Q9FZN8"/>
    </source>
</evidence>
<evidence type="ECO:0000269" key="6">
    <source>
    </source>
</evidence>
<evidence type="ECO:0000303" key="7">
    <source>
    </source>
</evidence>
<evidence type="ECO:0000305" key="8"/>
<dbReference type="EC" id="2.1.1.-" evidence="3"/>
<dbReference type="EMBL" id="AB207816">
    <property type="protein sequence ID" value="BAE79731.1"/>
    <property type="molecule type" value="mRNA"/>
</dbReference>
<dbReference type="SMR" id="Q2HXI7"/>
<dbReference type="GO" id="GO:0046872">
    <property type="term" value="F:metal ion binding"/>
    <property type="evidence" value="ECO:0007669"/>
    <property type="project" value="UniProtKB-KW"/>
</dbReference>
<dbReference type="GO" id="GO:0008168">
    <property type="term" value="F:methyltransferase activity"/>
    <property type="evidence" value="ECO:0007669"/>
    <property type="project" value="UniProtKB-KW"/>
</dbReference>
<dbReference type="GO" id="GO:0032259">
    <property type="term" value="P:methylation"/>
    <property type="evidence" value="ECO:0007669"/>
    <property type="project" value="UniProtKB-KW"/>
</dbReference>
<dbReference type="Gene3D" id="1.10.1200.270">
    <property type="entry name" value="Methyltransferase, alpha-helical capping domain"/>
    <property type="match status" value="1"/>
</dbReference>
<dbReference type="Gene3D" id="3.40.50.150">
    <property type="entry name" value="Vaccinia Virus protein VP39"/>
    <property type="match status" value="1"/>
</dbReference>
<dbReference type="InterPro" id="IPR005299">
    <property type="entry name" value="MeTrfase_7"/>
</dbReference>
<dbReference type="InterPro" id="IPR042086">
    <property type="entry name" value="MeTrfase_capping"/>
</dbReference>
<dbReference type="InterPro" id="IPR029063">
    <property type="entry name" value="SAM-dependent_MTases_sf"/>
</dbReference>
<dbReference type="PANTHER" id="PTHR31009">
    <property type="entry name" value="S-ADENOSYL-L-METHIONINE:CARBOXYL METHYLTRANSFERASE FAMILY PROTEIN"/>
    <property type="match status" value="1"/>
</dbReference>
<dbReference type="Pfam" id="PF03492">
    <property type="entry name" value="Methyltransf_7"/>
    <property type="match status" value="1"/>
</dbReference>
<dbReference type="SUPFAM" id="SSF53335">
    <property type="entry name" value="S-adenosyl-L-methionine-dependent methyltransferases"/>
    <property type="match status" value="1"/>
</dbReference>
<proteinExistence type="evidence at transcript level"/>
<comment type="function">
    <text evidence="6">No detectable N-methyltransferase activity.</text>
</comment>
<comment type="cofactor">
    <cofactor evidence="4">
        <name>Mg(2+)</name>
        <dbReference type="ChEBI" id="CHEBI:18420"/>
    </cofactor>
    <text evidence="4">Binds 1 Mg(2+) ion per subunit.</text>
</comment>
<comment type="similarity">
    <text evidence="8">Belongs to the methyltransferase superfamily. Type-7 methyltransferase family.</text>
</comment>
<accession>Q2HXI7</accession>